<dbReference type="EC" id="6.3.4.-" evidence="1"/>
<dbReference type="EMBL" id="CP000412">
    <property type="protein sequence ID" value="ABJ58904.1"/>
    <property type="molecule type" value="Genomic_DNA"/>
</dbReference>
<dbReference type="RefSeq" id="WP_003618178.1">
    <property type="nucleotide sequence ID" value="NC_008529.1"/>
</dbReference>
<dbReference type="SMR" id="Q049G8"/>
<dbReference type="KEGG" id="lbu:LBUL_1391"/>
<dbReference type="HOGENOM" id="CLU_038915_0_2_9"/>
<dbReference type="BioCyc" id="LDEL321956:LBUL_RS06545-MONOMER"/>
<dbReference type="GO" id="GO:0005737">
    <property type="term" value="C:cytoplasm"/>
    <property type="evidence" value="ECO:0007669"/>
    <property type="project" value="UniProtKB-SubCell"/>
</dbReference>
<dbReference type="GO" id="GO:0005524">
    <property type="term" value="F:ATP binding"/>
    <property type="evidence" value="ECO:0007669"/>
    <property type="project" value="UniProtKB-KW"/>
</dbReference>
<dbReference type="GO" id="GO:0016879">
    <property type="term" value="F:ligase activity, forming carbon-nitrogen bonds"/>
    <property type="evidence" value="ECO:0007669"/>
    <property type="project" value="UniProtKB-UniRule"/>
</dbReference>
<dbReference type="GO" id="GO:0000049">
    <property type="term" value="F:tRNA binding"/>
    <property type="evidence" value="ECO:0007669"/>
    <property type="project" value="UniProtKB-KW"/>
</dbReference>
<dbReference type="GO" id="GO:0006400">
    <property type="term" value="P:tRNA modification"/>
    <property type="evidence" value="ECO:0007669"/>
    <property type="project" value="UniProtKB-UniRule"/>
</dbReference>
<dbReference type="Gene3D" id="3.40.50.620">
    <property type="entry name" value="HUPs"/>
    <property type="match status" value="1"/>
</dbReference>
<dbReference type="HAMAP" id="MF_01539">
    <property type="entry name" value="TmcAL"/>
    <property type="match status" value="1"/>
</dbReference>
<dbReference type="InterPro" id="IPR014729">
    <property type="entry name" value="Rossmann-like_a/b/a_fold"/>
</dbReference>
<dbReference type="InterPro" id="IPR008513">
    <property type="entry name" value="tRNA(Met)_cyd_acetate_ligase"/>
</dbReference>
<dbReference type="NCBIfam" id="NF010191">
    <property type="entry name" value="PRK13670.1"/>
    <property type="match status" value="1"/>
</dbReference>
<dbReference type="PANTHER" id="PTHR37825">
    <property type="entry name" value="TRNA(MET) CYTIDINE ACETATE LIGASE"/>
    <property type="match status" value="1"/>
</dbReference>
<dbReference type="PANTHER" id="PTHR37825:SF1">
    <property type="entry name" value="TRNA(MET) CYTIDINE ACETATE LIGASE"/>
    <property type="match status" value="1"/>
</dbReference>
<dbReference type="Pfam" id="PF05636">
    <property type="entry name" value="HIGH_NTase1"/>
    <property type="match status" value="1"/>
</dbReference>
<dbReference type="SUPFAM" id="SSF52374">
    <property type="entry name" value="Nucleotidylyl transferase"/>
    <property type="match status" value="1"/>
</dbReference>
<organism>
    <name type="scientific">Lactobacillus delbrueckii subsp. bulgaricus (strain ATCC BAA-365 / Lb-18)</name>
    <dbReference type="NCBI Taxonomy" id="321956"/>
    <lineage>
        <taxon>Bacteria</taxon>
        <taxon>Bacillati</taxon>
        <taxon>Bacillota</taxon>
        <taxon>Bacilli</taxon>
        <taxon>Lactobacillales</taxon>
        <taxon>Lactobacillaceae</taxon>
        <taxon>Lactobacillus</taxon>
    </lineage>
</organism>
<protein>
    <recommendedName>
        <fullName evidence="1">tRNA(Met) cytidine acetate ligase</fullName>
        <ecNumber evidence="1">6.3.4.-</ecNumber>
    </recommendedName>
</protein>
<comment type="function">
    <text evidence="1">Catalyzes the formation of N(4)-acetylcytidine (ac(4)C) at the wobble position of elongator tRNA(Met), using acetate and ATP as substrates. First activates an acetate ion to form acetyladenylate (Ac-AMP) and then transfers the acetyl group to tRNA to form ac(4)C34.</text>
</comment>
<comment type="catalytic activity">
    <reaction evidence="1">
        <text>cytidine(34) in elongator tRNA(Met) + acetate + ATP = N(4)-acetylcytidine(34) in elongator tRNA(Met) + AMP + diphosphate</text>
        <dbReference type="Rhea" id="RHEA:58144"/>
        <dbReference type="Rhea" id="RHEA-COMP:10693"/>
        <dbReference type="Rhea" id="RHEA-COMP:10694"/>
        <dbReference type="ChEBI" id="CHEBI:30089"/>
        <dbReference type="ChEBI" id="CHEBI:30616"/>
        <dbReference type="ChEBI" id="CHEBI:33019"/>
        <dbReference type="ChEBI" id="CHEBI:74900"/>
        <dbReference type="ChEBI" id="CHEBI:82748"/>
        <dbReference type="ChEBI" id="CHEBI:456215"/>
    </reaction>
</comment>
<comment type="subcellular location">
    <subcellularLocation>
        <location evidence="1">Cytoplasm</location>
    </subcellularLocation>
</comment>
<comment type="similarity">
    <text evidence="1">Belongs to the TmcAL family.</text>
</comment>
<keyword id="KW-0067">ATP-binding</keyword>
<keyword id="KW-0963">Cytoplasm</keyword>
<keyword id="KW-0436">Ligase</keyword>
<keyword id="KW-0547">Nucleotide-binding</keyword>
<keyword id="KW-0694">RNA-binding</keyword>
<keyword id="KW-0819">tRNA processing</keyword>
<keyword id="KW-0820">tRNA-binding</keyword>
<evidence type="ECO:0000255" key="1">
    <source>
        <dbReference type="HAMAP-Rule" id="MF_01539"/>
    </source>
</evidence>
<name>TMCAL_LACDB</name>
<proteinExistence type="inferred from homology"/>
<accession>Q049G8</accession>
<sequence>MSVVGIVAEYNPFHSGHEFLMNQARLIAGDDPIIAVMSGNYVQRGEMAILDKWSRARSAIEAGADLVFELPFSYAVQAADMFATGGVDLLTRLGAKNLVFGVEDANLNFEYFGDRISKIPRQRQEFADYSQTYSTQYNQMVAREIGHEVSEPNAILGLAYAVANANLGSPLKLSPVNRVGAGHDDILQREAVVQSASAIRNLLLNGAERSELEQWLPKGEIAAFDQEKVLPNWELLFPFLKYRLESASIKELQQIYQMSEGLEYKFKAEIHLAENFADFLRRVKSKRYTYSRLRRLSLYTLLNVTEADVLNSYDHVSTMLLAYSKRGRKYLKQQRKDFEIDIVSKVDRKNAQEGTLGLQVRVDRLFEQIVGADQNFGRRPLEVN</sequence>
<feature type="chain" id="PRO_0000300174" description="tRNA(Met) cytidine acetate ligase">
    <location>
        <begin position="1"/>
        <end position="384"/>
    </location>
</feature>
<feature type="binding site" evidence="1">
    <location>
        <begin position="7"/>
        <end position="20"/>
    </location>
    <ligand>
        <name>ATP</name>
        <dbReference type="ChEBI" id="CHEBI:30616"/>
    </ligand>
</feature>
<feature type="binding site" evidence="1">
    <location>
        <position position="101"/>
    </location>
    <ligand>
        <name>ATP</name>
        <dbReference type="ChEBI" id="CHEBI:30616"/>
    </ligand>
</feature>
<feature type="binding site" evidence="1">
    <location>
        <position position="153"/>
    </location>
    <ligand>
        <name>ATP</name>
        <dbReference type="ChEBI" id="CHEBI:30616"/>
    </ligand>
</feature>
<feature type="binding site" evidence="1">
    <location>
        <position position="178"/>
    </location>
    <ligand>
        <name>ATP</name>
        <dbReference type="ChEBI" id="CHEBI:30616"/>
    </ligand>
</feature>
<gene>
    <name evidence="1" type="primary">tmcAL</name>
    <name type="ordered locus">LBUL_1391</name>
</gene>
<reference key="1">
    <citation type="journal article" date="2006" name="Proc. Natl. Acad. Sci. U.S.A.">
        <title>Comparative genomics of the lactic acid bacteria.</title>
        <authorList>
            <person name="Makarova K.S."/>
            <person name="Slesarev A."/>
            <person name="Wolf Y.I."/>
            <person name="Sorokin A."/>
            <person name="Mirkin B."/>
            <person name="Koonin E.V."/>
            <person name="Pavlov A."/>
            <person name="Pavlova N."/>
            <person name="Karamychev V."/>
            <person name="Polouchine N."/>
            <person name="Shakhova V."/>
            <person name="Grigoriev I."/>
            <person name="Lou Y."/>
            <person name="Rohksar D."/>
            <person name="Lucas S."/>
            <person name="Huang K."/>
            <person name="Goodstein D.M."/>
            <person name="Hawkins T."/>
            <person name="Plengvidhya V."/>
            <person name="Welker D."/>
            <person name="Hughes J."/>
            <person name="Goh Y."/>
            <person name="Benson A."/>
            <person name="Baldwin K."/>
            <person name="Lee J.-H."/>
            <person name="Diaz-Muniz I."/>
            <person name="Dosti B."/>
            <person name="Smeianov V."/>
            <person name="Wechter W."/>
            <person name="Barabote R."/>
            <person name="Lorca G."/>
            <person name="Altermann E."/>
            <person name="Barrangou R."/>
            <person name="Ganesan B."/>
            <person name="Xie Y."/>
            <person name="Rawsthorne H."/>
            <person name="Tamir D."/>
            <person name="Parker C."/>
            <person name="Breidt F."/>
            <person name="Broadbent J.R."/>
            <person name="Hutkins R."/>
            <person name="O'Sullivan D."/>
            <person name="Steele J."/>
            <person name="Unlu G."/>
            <person name="Saier M.H. Jr."/>
            <person name="Klaenhammer T."/>
            <person name="Richardson P."/>
            <person name="Kozyavkin S."/>
            <person name="Weimer B.C."/>
            <person name="Mills D.A."/>
        </authorList>
    </citation>
    <scope>NUCLEOTIDE SEQUENCE [LARGE SCALE GENOMIC DNA]</scope>
    <source>
        <strain>ATCC BAA-365 / Lb-18</strain>
    </source>
</reference>